<gene>
    <name type="primary">mdmB</name>
    <name type="synonym">mdm10</name>
    <name type="ORF">ATEG_06162</name>
</gene>
<protein>
    <recommendedName>
        <fullName evidence="1">Mitochondrial distribution and morphology protein 10</fullName>
    </recommendedName>
    <alternativeName>
        <fullName evidence="1">Mitochondrial inheritance component mdm10</fullName>
    </alternativeName>
</protein>
<reference key="1">
    <citation type="submission" date="2005-09" db="EMBL/GenBank/DDBJ databases">
        <title>Annotation of the Aspergillus terreus NIH2624 genome.</title>
        <authorList>
            <person name="Birren B.W."/>
            <person name="Lander E.S."/>
            <person name="Galagan J.E."/>
            <person name="Nusbaum C."/>
            <person name="Devon K."/>
            <person name="Henn M."/>
            <person name="Ma L.-J."/>
            <person name="Jaffe D.B."/>
            <person name="Butler J."/>
            <person name="Alvarez P."/>
            <person name="Gnerre S."/>
            <person name="Grabherr M."/>
            <person name="Kleber M."/>
            <person name="Mauceli E.W."/>
            <person name="Brockman W."/>
            <person name="Rounsley S."/>
            <person name="Young S.K."/>
            <person name="LaButti K."/>
            <person name="Pushparaj V."/>
            <person name="DeCaprio D."/>
            <person name="Crawford M."/>
            <person name="Koehrsen M."/>
            <person name="Engels R."/>
            <person name="Montgomery P."/>
            <person name="Pearson M."/>
            <person name="Howarth C."/>
            <person name="Larson L."/>
            <person name="Luoma S."/>
            <person name="White J."/>
            <person name="Alvarado L."/>
            <person name="Kodira C.D."/>
            <person name="Zeng Q."/>
            <person name="Oleary S."/>
            <person name="Yandava C."/>
            <person name="Denning D.W."/>
            <person name="Nierman W.C."/>
            <person name="Milne T."/>
            <person name="Madden K."/>
        </authorList>
    </citation>
    <scope>NUCLEOTIDE SEQUENCE [LARGE SCALE GENOMIC DNA]</scope>
    <source>
        <strain>NIH 2624 / FGSC A1156</strain>
    </source>
</reference>
<feature type="chain" id="PRO_0000384167" description="Mitochondrial distribution and morphology protein 10">
    <location>
        <begin position="1"/>
        <end position="459"/>
    </location>
</feature>
<name>MDM10_ASPTN</name>
<dbReference type="EMBL" id="CH476601">
    <property type="protein sequence ID" value="EAU33923.1"/>
    <property type="molecule type" value="Genomic_DNA"/>
</dbReference>
<dbReference type="RefSeq" id="XP_001215340.1">
    <property type="nucleotide sequence ID" value="XM_001215340.1"/>
</dbReference>
<dbReference type="SMR" id="Q0CJH2"/>
<dbReference type="STRING" id="341663.Q0CJH2"/>
<dbReference type="EnsemblFungi" id="EAU33923">
    <property type="protein sequence ID" value="EAU33923"/>
    <property type="gene ID" value="ATEG_06162"/>
</dbReference>
<dbReference type="GeneID" id="4321381"/>
<dbReference type="VEuPathDB" id="FungiDB:ATEG_06162"/>
<dbReference type="eggNOG" id="ENOG502QUN5">
    <property type="taxonomic scope" value="Eukaryota"/>
</dbReference>
<dbReference type="HOGENOM" id="CLU_026505_1_0_1"/>
<dbReference type="OMA" id="VPGYRQI"/>
<dbReference type="OrthoDB" id="2103793at2759"/>
<dbReference type="Proteomes" id="UP000007963">
    <property type="component" value="Unassembled WGS sequence"/>
</dbReference>
<dbReference type="GO" id="GO:0032865">
    <property type="term" value="C:ERMES complex"/>
    <property type="evidence" value="ECO:0007669"/>
    <property type="project" value="UniProtKB-UniRule"/>
</dbReference>
<dbReference type="GO" id="GO:0001401">
    <property type="term" value="C:SAM complex"/>
    <property type="evidence" value="ECO:0007669"/>
    <property type="project" value="TreeGrafter"/>
</dbReference>
<dbReference type="GO" id="GO:0051654">
    <property type="term" value="P:establishment of mitochondrion localization"/>
    <property type="evidence" value="ECO:0007669"/>
    <property type="project" value="TreeGrafter"/>
</dbReference>
<dbReference type="GO" id="GO:0000002">
    <property type="term" value="P:mitochondrial genome maintenance"/>
    <property type="evidence" value="ECO:0007669"/>
    <property type="project" value="UniProtKB-UniRule"/>
</dbReference>
<dbReference type="GO" id="GO:0070096">
    <property type="term" value="P:mitochondrial outer membrane translocase complex assembly"/>
    <property type="evidence" value="ECO:0007669"/>
    <property type="project" value="UniProtKB-UniRule"/>
</dbReference>
<dbReference type="GO" id="GO:1990456">
    <property type="term" value="P:mitochondrion-endoplasmic reticulum membrane tethering"/>
    <property type="evidence" value="ECO:0007669"/>
    <property type="project" value="UniProtKB-UniRule"/>
</dbReference>
<dbReference type="GO" id="GO:0015914">
    <property type="term" value="P:phospholipid transport"/>
    <property type="evidence" value="ECO:0007669"/>
    <property type="project" value="TreeGrafter"/>
</dbReference>
<dbReference type="GO" id="GO:0045040">
    <property type="term" value="P:protein insertion into mitochondrial outer membrane"/>
    <property type="evidence" value="ECO:0007669"/>
    <property type="project" value="UniProtKB-UniRule"/>
</dbReference>
<dbReference type="HAMAP" id="MF_03102">
    <property type="entry name" value="Mdm10"/>
    <property type="match status" value="1"/>
</dbReference>
<dbReference type="InterPro" id="IPR027539">
    <property type="entry name" value="Mdm10"/>
</dbReference>
<dbReference type="PANTHER" id="PTHR28035">
    <property type="entry name" value="MITOCHONDRIAL DISTRIBUTION AND MORPHOLOGY PROTEIN 10"/>
    <property type="match status" value="1"/>
</dbReference>
<dbReference type="PANTHER" id="PTHR28035:SF1">
    <property type="entry name" value="MITOCHONDRIAL DISTRIBUTION AND MORPHOLOGY PROTEIN 10"/>
    <property type="match status" value="1"/>
</dbReference>
<dbReference type="Pfam" id="PF12519">
    <property type="entry name" value="MDM10"/>
    <property type="match status" value="1"/>
</dbReference>
<keyword id="KW-0472">Membrane</keyword>
<keyword id="KW-0496">Mitochondrion</keyword>
<keyword id="KW-1000">Mitochondrion outer membrane</keyword>
<keyword id="KW-1185">Reference proteome</keyword>
<keyword id="KW-0812">Transmembrane</keyword>
<keyword id="KW-1134">Transmembrane beta strand</keyword>
<evidence type="ECO:0000255" key="1">
    <source>
        <dbReference type="HAMAP-Rule" id="MF_03102"/>
    </source>
</evidence>
<organism>
    <name type="scientific">Aspergillus terreus (strain NIH 2624 / FGSC A1156)</name>
    <dbReference type="NCBI Taxonomy" id="341663"/>
    <lineage>
        <taxon>Eukaryota</taxon>
        <taxon>Fungi</taxon>
        <taxon>Dikarya</taxon>
        <taxon>Ascomycota</taxon>
        <taxon>Pezizomycotina</taxon>
        <taxon>Eurotiomycetes</taxon>
        <taxon>Eurotiomycetidae</taxon>
        <taxon>Eurotiales</taxon>
        <taxon>Aspergillaceae</taxon>
        <taxon>Aspergillus</taxon>
        <taxon>Aspergillus subgen. Circumdati</taxon>
    </lineage>
</organism>
<comment type="function">
    <text evidence="1">Component of the ERMES/MDM complex, which serves as a molecular tether to connect the endoplasmic reticulum and mitochondria. Components of this complex are involved in the control of mitochondrial shape and protein biogenesis and may function in phospholipid exchange. mdm10 is involved in the late assembly steps of the general translocase of the mitochondrial outer membrane (TOM complex). Functions in the tom40-specific route of the assembly of outer membrane beta-barrel proteins, including the association of tom40 with the receptor tom22 and small TOM proteins. Can associate with the SAM(core) complex as well as the mdm12-mmm1 complex, both involved in late steps of the major beta-barrel assembly pathway, that is responsible for biogenesis of all outer membrane beta-barrel proteins. May act as a switch that shuttles between both complexes and channels precursor proteins into the tom40-specific pathway. Plays a role in mitochondrial morphology and in the inheritance of mitochondria.</text>
</comment>
<comment type="subunit">
    <text evidence="1">Component of the ER-mitochondria encounter structure (ERMES) or MDM complex, composed of mmm1, mdm10, mdm12 and mdm34. Associates with the mitochondrial outer membrane sorting assembly machinery SAM(core) complex.</text>
</comment>
<comment type="subcellular location">
    <subcellularLocation>
        <location evidence="1">Mitochondrion outer membrane</location>
        <topology evidence="1">Multi-pass membrane protein</topology>
    </subcellularLocation>
    <text evidence="1">The ERMES/MDM complex localizes to a few discrete foci (around 10 per single cell), that represent mitochondria-endoplasmic reticulum junctions. These foci are often found next to mtDNA nucleoids.</text>
</comment>
<comment type="domain">
    <text>Lacks alpha-helical transmembrane segments, suggesting that it resides in the membrane via beta-sheet conformations similar to those predicted for other outer membrane proteins and porin.</text>
</comment>
<comment type="similarity">
    <text evidence="1">Belongs to the MDM10 family.</text>
</comment>
<sequence>MLDFMEYIQLGFAEATNWNRDNSYSSLTATAQSLLDFKTPERLRVHLSSLSTPHFATSYTLGTVGLIDGSVSYLYSTVPFDHTPSRSALIPLRKLAPGYRQVQPPVAPIENWGWDSTLNHETTPLAQKATLLHATMHMPPPTTLNALFLRRISPTMQLTLAVCSTRGPPLSKSAPQASLLTQLSHDTGKYSNEYLFSTDNALFGWRGLWNFGPDPRNPADDAAPRLSLLSAGAEAYYSPVSSLVGMSTGLRFSTLPAATDASSAPSSSSSPSSATPTQISTFPYTLTLTLTPMTGSLSTTYSLRASPNLSFSSRFGFNVYSWESEMVAGCELWRQSRKRVPAEEEDDGLEWARRKLRMMDDAAVPLPPTSSVPAEPEQDETTESVLKIRVDQSWNVRLLWEGRVKELLVSAGVGLGPSSFSSSAWTNSTAGGAGGQASGGGNAGTSYWRGVGVSVSYSS</sequence>
<proteinExistence type="inferred from homology"/>
<accession>Q0CJH2</accession>